<dbReference type="EC" id="1.14.11.64" evidence="1"/>
<dbReference type="EMBL" id="FM180568">
    <property type="protein sequence ID" value="CAS10470.1"/>
    <property type="molecule type" value="Genomic_DNA"/>
</dbReference>
<dbReference type="RefSeq" id="WP_000993124.1">
    <property type="nucleotide sequence ID" value="NC_011601.1"/>
</dbReference>
<dbReference type="SMR" id="B7UH78"/>
<dbReference type="KEGG" id="ecg:E2348C_2922"/>
<dbReference type="HOGENOM" id="CLU_075277_0_0_6"/>
<dbReference type="Proteomes" id="UP000008205">
    <property type="component" value="Chromosome"/>
</dbReference>
<dbReference type="GO" id="GO:0008198">
    <property type="term" value="F:ferrous iron binding"/>
    <property type="evidence" value="ECO:0007669"/>
    <property type="project" value="UniProtKB-UniRule"/>
</dbReference>
<dbReference type="GO" id="GO:0106343">
    <property type="term" value="F:glutarate dioxygenase activity"/>
    <property type="evidence" value="ECO:0007669"/>
    <property type="project" value="UniProtKB-EC"/>
</dbReference>
<dbReference type="GO" id="GO:0050498">
    <property type="term" value="F:oxidoreductase activity, acting on paired donors, with incorporation or reduction of molecular oxygen, with 2-oxoglutarate as one donor, and the other dehydrogenated"/>
    <property type="evidence" value="ECO:0007669"/>
    <property type="project" value="UniProtKB-UniRule"/>
</dbReference>
<dbReference type="GO" id="GO:0019477">
    <property type="term" value="P:L-lysine catabolic process"/>
    <property type="evidence" value="ECO:0007669"/>
    <property type="project" value="UniProtKB-UniRule"/>
</dbReference>
<dbReference type="CDD" id="cd00250">
    <property type="entry name" value="CAS_like"/>
    <property type="match status" value="1"/>
</dbReference>
<dbReference type="FunFam" id="3.60.130.10:FF:000004">
    <property type="entry name" value="Glutarate 2-hydroxylase"/>
    <property type="match status" value="1"/>
</dbReference>
<dbReference type="Gene3D" id="3.60.130.10">
    <property type="entry name" value="Clavaminate synthase-like"/>
    <property type="match status" value="1"/>
</dbReference>
<dbReference type="HAMAP" id="MF_01083">
    <property type="entry name" value="glutarate_hydroxylase"/>
    <property type="match status" value="1"/>
</dbReference>
<dbReference type="InterPro" id="IPR015038">
    <property type="entry name" value="GlaH"/>
</dbReference>
<dbReference type="InterPro" id="IPR042098">
    <property type="entry name" value="TauD-like_sf"/>
</dbReference>
<dbReference type="NCBIfam" id="NF002814">
    <property type="entry name" value="PRK02963.1"/>
    <property type="match status" value="1"/>
</dbReference>
<dbReference type="Pfam" id="PF08943">
    <property type="entry name" value="CsiD"/>
    <property type="match status" value="1"/>
</dbReference>
<dbReference type="SUPFAM" id="SSF51197">
    <property type="entry name" value="Clavaminate synthase-like"/>
    <property type="match status" value="1"/>
</dbReference>
<comment type="function">
    <text evidence="1">Acts as an alpha-ketoglutarate-dependent dioxygenase catalyzing hydroxylation of glutarate (GA) to L-2-hydroxyglutarate (L2HG). Functions in a L-lysine degradation pathway that proceeds via cadaverine, glutarate and L-2-hydroxyglutarate.</text>
</comment>
<comment type="catalytic activity">
    <reaction evidence="1">
        <text>glutarate + 2-oxoglutarate + O2 = (S)-2-hydroxyglutarate + succinate + CO2</text>
        <dbReference type="Rhea" id="RHEA:13821"/>
        <dbReference type="ChEBI" id="CHEBI:15379"/>
        <dbReference type="ChEBI" id="CHEBI:16526"/>
        <dbReference type="ChEBI" id="CHEBI:16782"/>
        <dbReference type="ChEBI" id="CHEBI:16810"/>
        <dbReference type="ChEBI" id="CHEBI:30031"/>
        <dbReference type="ChEBI" id="CHEBI:30921"/>
        <dbReference type="EC" id="1.14.11.64"/>
    </reaction>
    <physiologicalReaction direction="left-to-right" evidence="1">
        <dbReference type="Rhea" id="RHEA:13822"/>
    </physiologicalReaction>
</comment>
<comment type="cofactor">
    <cofactor evidence="1">
        <name>Fe(2+)</name>
        <dbReference type="ChEBI" id="CHEBI:29033"/>
    </cofactor>
    <text evidence="1">Binds 1 Fe(2+) ion per subunit.</text>
</comment>
<comment type="pathway">
    <text evidence="1">Amino-acid degradation.</text>
</comment>
<comment type="subunit">
    <text evidence="1">Homotetramer.</text>
</comment>
<comment type="similarity">
    <text evidence="1">Belongs to the glutarate hydroxylase family.</text>
</comment>
<reference key="1">
    <citation type="journal article" date="2009" name="J. Bacteriol.">
        <title>Complete genome sequence and comparative genome analysis of enteropathogenic Escherichia coli O127:H6 strain E2348/69.</title>
        <authorList>
            <person name="Iguchi A."/>
            <person name="Thomson N.R."/>
            <person name="Ogura Y."/>
            <person name="Saunders D."/>
            <person name="Ooka T."/>
            <person name="Henderson I.R."/>
            <person name="Harris D."/>
            <person name="Asadulghani M."/>
            <person name="Kurokawa K."/>
            <person name="Dean P."/>
            <person name="Kenny B."/>
            <person name="Quail M.A."/>
            <person name="Thurston S."/>
            <person name="Dougan G."/>
            <person name="Hayashi T."/>
            <person name="Parkhill J."/>
            <person name="Frankel G."/>
        </authorList>
    </citation>
    <scope>NUCLEOTIDE SEQUENCE [LARGE SCALE GENOMIC DNA]</scope>
    <source>
        <strain>E2348/69 / EPEC</strain>
    </source>
</reference>
<evidence type="ECO:0000255" key="1">
    <source>
        <dbReference type="HAMAP-Rule" id="MF_01083"/>
    </source>
</evidence>
<gene>
    <name evidence="1" type="primary">glaH</name>
    <name type="ordered locus">E2348C_2922</name>
</gene>
<sequence length="325" mass="37359">MNALTAVQNNAVDSGQDYSGFTLIPSAQSPRLPELTFTEQTTNRFLEQVAEWPVQALEYKSFLRFRVGKILDDLCANQLQPLLLKTLLNRAEGALLINAVGIDDVAQADEMVKLATAVAHLIGRSNFDAMSGQYYARFVVKNVDNSDSYLRQPHRVMELHNDGTYVEEITDYVLMMKIDEQNMQGGNSLLLHLDDWEHLDLFFRHPLARRPMRFAAPPSKNVSKDVFYPVFDVDQQGRPVMRYIDQFVQPKDFEEGVWLSELSDAIETSKGILSVPVPVGKFLLINNLFWLHGRDRFTPHPDLRRELMRQRGYFAYATHHYQTHQ</sequence>
<organism>
    <name type="scientific">Escherichia coli O127:H6 (strain E2348/69 / EPEC)</name>
    <dbReference type="NCBI Taxonomy" id="574521"/>
    <lineage>
        <taxon>Bacteria</taxon>
        <taxon>Pseudomonadati</taxon>
        <taxon>Pseudomonadota</taxon>
        <taxon>Gammaproteobacteria</taxon>
        <taxon>Enterobacterales</taxon>
        <taxon>Enterobacteriaceae</taxon>
        <taxon>Escherichia</taxon>
    </lineage>
</organism>
<accession>B7UH78</accession>
<proteinExistence type="inferred from homology"/>
<feature type="chain" id="PRO_1000149850" description="Glutarate 2-hydroxylase">
    <location>
        <begin position="1"/>
        <end position="325"/>
    </location>
</feature>
<feature type="binding site" evidence="1">
    <location>
        <position position="160"/>
    </location>
    <ligand>
        <name>Fe cation</name>
        <dbReference type="ChEBI" id="CHEBI:24875"/>
    </ligand>
</feature>
<feature type="binding site" evidence="1">
    <location>
        <position position="162"/>
    </location>
    <ligand>
        <name>Fe cation</name>
        <dbReference type="ChEBI" id="CHEBI:24875"/>
    </ligand>
</feature>
<feature type="binding site" evidence="1">
    <location>
        <position position="292"/>
    </location>
    <ligand>
        <name>Fe cation</name>
        <dbReference type="ChEBI" id="CHEBI:24875"/>
    </ligand>
</feature>
<protein>
    <recommendedName>
        <fullName evidence="1">Glutarate 2-hydroxylase</fullName>
        <shortName evidence="1">G-2-H</shortName>
        <ecNumber evidence="1">1.14.11.64</ecNumber>
    </recommendedName>
</protein>
<keyword id="KW-0223">Dioxygenase</keyword>
<keyword id="KW-0408">Iron</keyword>
<keyword id="KW-0479">Metal-binding</keyword>
<keyword id="KW-0560">Oxidoreductase</keyword>
<keyword id="KW-1185">Reference proteome</keyword>
<name>GLAH_ECO27</name>